<keyword id="KW-0067">ATP-binding</keyword>
<keyword id="KW-0997">Cell inner membrane</keyword>
<keyword id="KW-1003">Cell membrane</keyword>
<keyword id="KW-0963">Cytoplasm</keyword>
<keyword id="KW-0472">Membrane</keyword>
<keyword id="KW-0479">Metal-binding</keyword>
<keyword id="KW-0547">Nucleotide-binding</keyword>
<keyword id="KW-0653">Protein transport</keyword>
<keyword id="KW-1278">Translocase</keyword>
<keyword id="KW-0811">Translocation</keyword>
<keyword id="KW-0813">Transport</keyword>
<keyword id="KW-0862">Zinc</keyword>
<proteinExistence type="inferred from homology"/>
<comment type="function">
    <text evidence="1">Part of the Sec protein translocase complex. Interacts with the SecYEG preprotein conducting channel. Has a central role in coupling the hydrolysis of ATP to the transfer of proteins into and across the cell membrane, serving both as a receptor for the preprotein-SecB complex and as an ATP-driven molecular motor driving the stepwise translocation of polypeptide chains across the membrane.</text>
</comment>
<comment type="catalytic activity">
    <reaction evidence="1">
        <text>ATP + H2O + cellular proteinSide 1 = ADP + phosphate + cellular proteinSide 2.</text>
        <dbReference type="EC" id="7.4.2.8"/>
    </reaction>
</comment>
<comment type="cofactor">
    <cofactor evidence="1">
        <name>Zn(2+)</name>
        <dbReference type="ChEBI" id="CHEBI:29105"/>
    </cofactor>
    <text evidence="1">May bind 1 zinc ion per subunit.</text>
</comment>
<comment type="subunit">
    <text evidence="1">Monomer and homodimer. Part of the essential Sec protein translocation apparatus which comprises SecA, SecYEG and auxiliary proteins SecDF-YajC and YidC.</text>
</comment>
<comment type="subcellular location">
    <subcellularLocation>
        <location evidence="1">Cell inner membrane</location>
        <topology evidence="1">Peripheral membrane protein</topology>
        <orientation evidence="1">Cytoplasmic side</orientation>
    </subcellularLocation>
    <subcellularLocation>
        <location evidence="1">Cytoplasm</location>
    </subcellularLocation>
    <text evidence="1">Distribution is 50-50.</text>
</comment>
<comment type="similarity">
    <text evidence="1">Belongs to the SecA family.</text>
</comment>
<reference key="1">
    <citation type="journal article" date="2010" name="Appl. Environ. Microbiol.">
        <title>Conserved symbiotic plasmid DNA sequences in the multireplicon pangenomic structure of Rhizobium etli.</title>
        <authorList>
            <person name="Gonzalez V."/>
            <person name="Acosta J.L."/>
            <person name="Santamaria R.I."/>
            <person name="Bustos P."/>
            <person name="Fernandez J.L."/>
            <person name="Hernandez Gonzalez I.L."/>
            <person name="Diaz R."/>
            <person name="Flores M."/>
            <person name="Palacios R."/>
            <person name="Mora J."/>
            <person name="Davila G."/>
        </authorList>
    </citation>
    <scope>NUCLEOTIDE SEQUENCE [LARGE SCALE GENOMIC DNA]</scope>
    <source>
        <strain>CIAT 652</strain>
    </source>
</reference>
<gene>
    <name evidence="1" type="primary">secA</name>
    <name type="ordered locus">RHECIAT_CH0004039</name>
</gene>
<organism>
    <name type="scientific">Rhizobium etli (strain CIAT 652)</name>
    <dbReference type="NCBI Taxonomy" id="491916"/>
    <lineage>
        <taxon>Bacteria</taxon>
        <taxon>Pseudomonadati</taxon>
        <taxon>Pseudomonadota</taxon>
        <taxon>Alphaproteobacteria</taxon>
        <taxon>Hyphomicrobiales</taxon>
        <taxon>Rhizobiaceae</taxon>
        <taxon>Rhizobium/Agrobacterium group</taxon>
        <taxon>Rhizobium</taxon>
    </lineage>
</organism>
<evidence type="ECO:0000255" key="1">
    <source>
        <dbReference type="HAMAP-Rule" id="MF_01382"/>
    </source>
</evidence>
<accession>B3PP95</accession>
<dbReference type="EC" id="7.4.2.8" evidence="1"/>
<dbReference type="EMBL" id="CP001074">
    <property type="protein sequence ID" value="ACE92970.1"/>
    <property type="molecule type" value="Genomic_DNA"/>
</dbReference>
<dbReference type="SMR" id="B3PP95"/>
<dbReference type="KEGG" id="rec:RHECIAT_CH0004039"/>
<dbReference type="eggNOG" id="COG0653">
    <property type="taxonomic scope" value="Bacteria"/>
</dbReference>
<dbReference type="HOGENOM" id="CLU_005314_3_0_5"/>
<dbReference type="Proteomes" id="UP000008817">
    <property type="component" value="Chromosome"/>
</dbReference>
<dbReference type="GO" id="GO:0031522">
    <property type="term" value="C:cell envelope Sec protein transport complex"/>
    <property type="evidence" value="ECO:0007669"/>
    <property type="project" value="TreeGrafter"/>
</dbReference>
<dbReference type="GO" id="GO:0005829">
    <property type="term" value="C:cytosol"/>
    <property type="evidence" value="ECO:0007669"/>
    <property type="project" value="TreeGrafter"/>
</dbReference>
<dbReference type="GO" id="GO:0005886">
    <property type="term" value="C:plasma membrane"/>
    <property type="evidence" value="ECO:0007669"/>
    <property type="project" value="UniProtKB-SubCell"/>
</dbReference>
<dbReference type="GO" id="GO:0005524">
    <property type="term" value="F:ATP binding"/>
    <property type="evidence" value="ECO:0007669"/>
    <property type="project" value="UniProtKB-UniRule"/>
</dbReference>
<dbReference type="GO" id="GO:0046872">
    <property type="term" value="F:metal ion binding"/>
    <property type="evidence" value="ECO:0007669"/>
    <property type="project" value="UniProtKB-KW"/>
</dbReference>
<dbReference type="GO" id="GO:0008564">
    <property type="term" value="F:protein-exporting ATPase activity"/>
    <property type="evidence" value="ECO:0007669"/>
    <property type="project" value="UniProtKB-EC"/>
</dbReference>
<dbReference type="GO" id="GO:0065002">
    <property type="term" value="P:intracellular protein transmembrane transport"/>
    <property type="evidence" value="ECO:0007669"/>
    <property type="project" value="UniProtKB-UniRule"/>
</dbReference>
<dbReference type="GO" id="GO:0017038">
    <property type="term" value="P:protein import"/>
    <property type="evidence" value="ECO:0007669"/>
    <property type="project" value="InterPro"/>
</dbReference>
<dbReference type="GO" id="GO:0006605">
    <property type="term" value="P:protein targeting"/>
    <property type="evidence" value="ECO:0007669"/>
    <property type="project" value="UniProtKB-UniRule"/>
</dbReference>
<dbReference type="GO" id="GO:0043952">
    <property type="term" value="P:protein transport by the Sec complex"/>
    <property type="evidence" value="ECO:0007669"/>
    <property type="project" value="TreeGrafter"/>
</dbReference>
<dbReference type="CDD" id="cd17928">
    <property type="entry name" value="DEXDc_SecA"/>
    <property type="match status" value="1"/>
</dbReference>
<dbReference type="CDD" id="cd18803">
    <property type="entry name" value="SF2_C_secA"/>
    <property type="match status" value="1"/>
</dbReference>
<dbReference type="FunFam" id="3.90.1440.10:FF:000001">
    <property type="entry name" value="Preprotein translocase subunit SecA"/>
    <property type="match status" value="1"/>
</dbReference>
<dbReference type="FunFam" id="1.10.3060.10:FF:000003">
    <property type="entry name" value="Protein translocase subunit SecA"/>
    <property type="match status" value="1"/>
</dbReference>
<dbReference type="FunFam" id="3.40.50.300:FF:000334">
    <property type="entry name" value="Protein translocase subunit SecA"/>
    <property type="match status" value="1"/>
</dbReference>
<dbReference type="FunFam" id="3.40.50.300:FF:001790">
    <property type="entry name" value="Protein translocase subunit SecA"/>
    <property type="match status" value="1"/>
</dbReference>
<dbReference type="Gene3D" id="3.10.450.50">
    <property type="match status" value="1"/>
</dbReference>
<dbReference type="Gene3D" id="1.10.3060.10">
    <property type="entry name" value="Helical scaffold and wing domains of SecA"/>
    <property type="match status" value="1"/>
</dbReference>
<dbReference type="Gene3D" id="3.40.50.300">
    <property type="entry name" value="P-loop containing nucleotide triphosphate hydrolases"/>
    <property type="match status" value="2"/>
</dbReference>
<dbReference type="Gene3D" id="3.90.1440.10">
    <property type="entry name" value="SecA, preprotein cross-linking domain"/>
    <property type="match status" value="1"/>
</dbReference>
<dbReference type="HAMAP" id="MF_01382">
    <property type="entry name" value="SecA"/>
    <property type="match status" value="1"/>
</dbReference>
<dbReference type="InterPro" id="IPR014001">
    <property type="entry name" value="Helicase_ATP-bd"/>
</dbReference>
<dbReference type="InterPro" id="IPR027417">
    <property type="entry name" value="P-loop_NTPase"/>
</dbReference>
<dbReference type="InterPro" id="IPR004027">
    <property type="entry name" value="SEC_C_motif"/>
</dbReference>
<dbReference type="InterPro" id="IPR000185">
    <property type="entry name" value="SecA"/>
</dbReference>
<dbReference type="InterPro" id="IPR020937">
    <property type="entry name" value="SecA_CS"/>
</dbReference>
<dbReference type="InterPro" id="IPR011115">
    <property type="entry name" value="SecA_DEAD"/>
</dbReference>
<dbReference type="InterPro" id="IPR014018">
    <property type="entry name" value="SecA_motor_DEAD"/>
</dbReference>
<dbReference type="InterPro" id="IPR011130">
    <property type="entry name" value="SecA_preprotein_X-link_dom"/>
</dbReference>
<dbReference type="InterPro" id="IPR044722">
    <property type="entry name" value="SecA_SF2_C"/>
</dbReference>
<dbReference type="InterPro" id="IPR011116">
    <property type="entry name" value="SecA_Wing/Scaffold"/>
</dbReference>
<dbReference type="InterPro" id="IPR036266">
    <property type="entry name" value="SecA_Wing/Scaffold_sf"/>
</dbReference>
<dbReference type="InterPro" id="IPR036670">
    <property type="entry name" value="SecA_X-link_sf"/>
</dbReference>
<dbReference type="NCBIfam" id="NF009538">
    <property type="entry name" value="PRK12904.1"/>
    <property type="match status" value="1"/>
</dbReference>
<dbReference type="NCBIfam" id="TIGR00963">
    <property type="entry name" value="secA"/>
    <property type="match status" value="1"/>
</dbReference>
<dbReference type="PANTHER" id="PTHR30612:SF0">
    <property type="entry name" value="CHLOROPLAST PROTEIN-TRANSPORTING ATPASE"/>
    <property type="match status" value="1"/>
</dbReference>
<dbReference type="PANTHER" id="PTHR30612">
    <property type="entry name" value="SECA INNER MEMBRANE COMPONENT OF SEC PROTEIN SECRETION SYSTEM"/>
    <property type="match status" value="1"/>
</dbReference>
<dbReference type="Pfam" id="PF21090">
    <property type="entry name" value="P-loop_SecA"/>
    <property type="match status" value="1"/>
</dbReference>
<dbReference type="Pfam" id="PF02810">
    <property type="entry name" value="SEC-C"/>
    <property type="match status" value="1"/>
</dbReference>
<dbReference type="Pfam" id="PF07517">
    <property type="entry name" value="SecA_DEAD"/>
    <property type="match status" value="1"/>
</dbReference>
<dbReference type="Pfam" id="PF01043">
    <property type="entry name" value="SecA_PP_bind"/>
    <property type="match status" value="1"/>
</dbReference>
<dbReference type="Pfam" id="PF07516">
    <property type="entry name" value="SecA_SW"/>
    <property type="match status" value="1"/>
</dbReference>
<dbReference type="PRINTS" id="PR00906">
    <property type="entry name" value="SECA"/>
</dbReference>
<dbReference type="SMART" id="SM00957">
    <property type="entry name" value="SecA_DEAD"/>
    <property type="match status" value="1"/>
</dbReference>
<dbReference type="SMART" id="SM00958">
    <property type="entry name" value="SecA_PP_bind"/>
    <property type="match status" value="1"/>
</dbReference>
<dbReference type="SUPFAM" id="SSF81886">
    <property type="entry name" value="Helical scaffold and wing domains of SecA"/>
    <property type="match status" value="1"/>
</dbReference>
<dbReference type="SUPFAM" id="SSF52540">
    <property type="entry name" value="P-loop containing nucleoside triphosphate hydrolases"/>
    <property type="match status" value="2"/>
</dbReference>
<dbReference type="SUPFAM" id="SSF81767">
    <property type="entry name" value="Pre-protein crosslinking domain of SecA"/>
    <property type="match status" value="1"/>
</dbReference>
<dbReference type="PROSITE" id="PS01312">
    <property type="entry name" value="SECA"/>
    <property type="match status" value="1"/>
</dbReference>
<dbReference type="PROSITE" id="PS51196">
    <property type="entry name" value="SECA_MOTOR_DEAD"/>
    <property type="match status" value="1"/>
</dbReference>
<feature type="chain" id="PRO_1000145049" description="Protein translocase subunit SecA">
    <location>
        <begin position="1"/>
        <end position="904"/>
    </location>
</feature>
<feature type="binding site" evidence="1">
    <location>
        <position position="89"/>
    </location>
    <ligand>
        <name>ATP</name>
        <dbReference type="ChEBI" id="CHEBI:30616"/>
    </ligand>
</feature>
<feature type="binding site" evidence="1">
    <location>
        <begin position="107"/>
        <end position="111"/>
    </location>
    <ligand>
        <name>ATP</name>
        <dbReference type="ChEBI" id="CHEBI:30616"/>
    </ligand>
</feature>
<feature type="binding site" evidence="1">
    <location>
        <position position="502"/>
    </location>
    <ligand>
        <name>ATP</name>
        <dbReference type="ChEBI" id="CHEBI:30616"/>
    </ligand>
</feature>
<feature type="binding site" evidence="1">
    <location>
        <position position="886"/>
    </location>
    <ligand>
        <name>Zn(2+)</name>
        <dbReference type="ChEBI" id="CHEBI:29105"/>
    </ligand>
</feature>
<feature type="binding site" evidence="1">
    <location>
        <position position="888"/>
    </location>
    <ligand>
        <name>Zn(2+)</name>
        <dbReference type="ChEBI" id="CHEBI:29105"/>
    </ligand>
</feature>
<feature type="binding site" evidence="1">
    <location>
        <position position="897"/>
    </location>
    <ligand>
        <name>Zn(2+)</name>
        <dbReference type="ChEBI" id="CHEBI:29105"/>
    </ligand>
</feature>
<feature type="binding site" evidence="1">
    <location>
        <position position="898"/>
    </location>
    <ligand>
        <name>Zn(2+)</name>
        <dbReference type="ChEBI" id="CHEBI:29105"/>
    </ligand>
</feature>
<name>SECA_RHIE6</name>
<sequence length="904" mass="102289">MVSFGGIARKLFGSSNDRRVRSFQPNVTAINSIEEKTKALTDEQLAAKTAEFRALLAEGKTLDDILIPAFAVVREASRRVLDLRPFDVQLIGGMILHSNAIAEMKTGEGKTLVATLPVYLNALSGKGVHVVTVNDYLAQRDAATMGRVYGFLGMTTGVIVHGLSDEERRAAYACDITYATNNELGFDYLRDNMKYEKNQMVQRGHNFAIVDEVDSILVDEARTPLIISGPLDDRSELYNTIDAFIPLLVPSDYEIDEKQRSANFSEEGTEKLENMLRQAGLLKGNALYDIENVAIVHHINNALKAHKLFQRDKDYIVRNGEVVIIDEFTGRMMPGRRYSEGQHQALEAKEKVQIQPENQTLASITFQNYFRMYDKLAGMTGTAQTEAEEFGNIYNLDVIEVPTNLPIKRIDEDDEVYRTFDEKFKAIIEEILDAHKRGQPVLVGTTSIEKSELLAERLRKQGFNDFQVLNARYHEQEAYIVAQAGVPGAVTIATNMAGRGTDIQLGGNLEMRIERELGEIEAGPEREARIQAIVEEIKELKQKALTAGGLYVIATERHESRRIDNQLRGRSGRQGDPGRSKFYLSLQDDLMRIFGSDRMDSMLTKLGLKEGEAIVHPWINKALERAQKKVEARNFDIRKNLLKYDDVLNDQRKVIFEQRLELMESTNISETVSDMRREVIEDLVEKHIPERAYAEQWDAVGLKTGVTNILNLDLPIEDWFKEEGIGEDDIRERLTEAANAAFTEKAERFGDDIMHYVERSIVMQTLDHLWREHIVNLDHLRSVIGFRGYAQRDPLQEYKSEAFELFTGLLNNLREAVTAQLMRVELVQQAPAEPEPPLMQAHHLDPMTGEDDFAPIYQASEVIVAPENRNPEDPTTWGKIGRNEACPCGSGKKYKHCHGAFEQV</sequence>
<protein>
    <recommendedName>
        <fullName evidence="1">Protein translocase subunit SecA</fullName>
        <ecNumber evidence="1">7.4.2.8</ecNumber>
    </recommendedName>
</protein>